<reference key="1">
    <citation type="journal article" date="2009" name="PLoS ONE">
        <title>The complete genome of Teredinibacter turnerae T7901: an intracellular endosymbiont of marine wood-boring bivalves (shipworms).</title>
        <authorList>
            <person name="Yang J.C."/>
            <person name="Madupu R."/>
            <person name="Durkin A.S."/>
            <person name="Ekborg N.A."/>
            <person name="Pedamallu C.S."/>
            <person name="Hostetler J.B."/>
            <person name="Radune D."/>
            <person name="Toms B.S."/>
            <person name="Henrissat B."/>
            <person name="Coutinho P.M."/>
            <person name="Schwarz S."/>
            <person name="Field L."/>
            <person name="Trindade-Silva A.E."/>
            <person name="Soares C.A.G."/>
            <person name="Elshahawi S."/>
            <person name="Hanora A."/>
            <person name="Schmidt E.W."/>
            <person name="Haygood M.G."/>
            <person name="Posfai J."/>
            <person name="Benner J."/>
            <person name="Madinger C."/>
            <person name="Nove J."/>
            <person name="Anton B."/>
            <person name="Chaudhary K."/>
            <person name="Foster J."/>
            <person name="Holman A."/>
            <person name="Kumar S."/>
            <person name="Lessard P.A."/>
            <person name="Luyten Y.A."/>
            <person name="Slatko B."/>
            <person name="Wood N."/>
            <person name="Wu B."/>
            <person name="Teplitski M."/>
            <person name="Mougous J.D."/>
            <person name="Ward N."/>
            <person name="Eisen J.A."/>
            <person name="Badger J.H."/>
            <person name="Distel D.L."/>
        </authorList>
    </citation>
    <scope>NUCLEOTIDE SEQUENCE [LARGE SCALE GENOMIC DNA]</scope>
    <source>
        <strain>ATCC 39867 / T7901</strain>
    </source>
</reference>
<protein>
    <recommendedName>
        <fullName evidence="1">Thiopurine S-methyltransferase</fullName>
        <ecNumber evidence="1">2.1.1.67</ecNumber>
    </recommendedName>
    <alternativeName>
        <fullName evidence="1">Thiopurine methyltransferase</fullName>
    </alternativeName>
</protein>
<gene>
    <name evidence="1" type="primary">tpm</name>
    <name type="ordered locus">TERTU_2055</name>
</gene>
<dbReference type="EC" id="2.1.1.67" evidence="1"/>
<dbReference type="EMBL" id="CP001614">
    <property type="protein sequence ID" value="ACR11428.1"/>
    <property type="molecule type" value="Genomic_DNA"/>
</dbReference>
<dbReference type="RefSeq" id="WP_015817540.1">
    <property type="nucleotide sequence ID" value="NC_012997.1"/>
</dbReference>
<dbReference type="SMR" id="C5BIS1"/>
<dbReference type="STRING" id="377629.TERTU_2055"/>
<dbReference type="KEGG" id="ttu:TERTU_2055"/>
<dbReference type="eggNOG" id="COG0500">
    <property type="taxonomic scope" value="Bacteria"/>
</dbReference>
<dbReference type="HOGENOM" id="CLU_085515_1_0_6"/>
<dbReference type="OrthoDB" id="9778208at2"/>
<dbReference type="Proteomes" id="UP000009080">
    <property type="component" value="Chromosome"/>
</dbReference>
<dbReference type="GO" id="GO:0005737">
    <property type="term" value="C:cytoplasm"/>
    <property type="evidence" value="ECO:0007669"/>
    <property type="project" value="UniProtKB-SubCell"/>
</dbReference>
<dbReference type="GO" id="GO:0008119">
    <property type="term" value="F:thiopurine S-methyltransferase activity"/>
    <property type="evidence" value="ECO:0007669"/>
    <property type="project" value="UniProtKB-UniRule"/>
</dbReference>
<dbReference type="GO" id="GO:0032259">
    <property type="term" value="P:methylation"/>
    <property type="evidence" value="ECO:0007669"/>
    <property type="project" value="UniProtKB-KW"/>
</dbReference>
<dbReference type="GO" id="GO:0010038">
    <property type="term" value="P:response to metal ion"/>
    <property type="evidence" value="ECO:0007669"/>
    <property type="project" value="InterPro"/>
</dbReference>
<dbReference type="FunFam" id="3.40.50.150:FF:000101">
    <property type="entry name" value="Thiopurine S-methyltransferase"/>
    <property type="match status" value="1"/>
</dbReference>
<dbReference type="Gene3D" id="3.40.50.150">
    <property type="entry name" value="Vaccinia Virus protein VP39"/>
    <property type="match status" value="1"/>
</dbReference>
<dbReference type="HAMAP" id="MF_00812">
    <property type="entry name" value="Thiopur_methtran"/>
    <property type="match status" value="1"/>
</dbReference>
<dbReference type="InterPro" id="IPR029063">
    <property type="entry name" value="SAM-dependent_MTases_sf"/>
</dbReference>
<dbReference type="InterPro" id="IPR022474">
    <property type="entry name" value="Thiopur_S-MeTfrase_Se/Te_detox"/>
</dbReference>
<dbReference type="InterPro" id="IPR025835">
    <property type="entry name" value="Thiopurine_S-MeTrfase"/>
</dbReference>
<dbReference type="InterPro" id="IPR008854">
    <property type="entry name" value="TPMT"/>
</dbReference>
<dbReference type="NCBIfam" id="NF009732">
    <property type="entry name" value="PRK13255.1"/>
    <property type="match status" value="1"/>
</dbReference>
<dbReference type="NCBIfam" id="TIGR03840">
    <property type="entry name" value="TMPT_Se_Te"/>
    <property type="match status" value="1"/>
</dbReference>
<dbReference type="PANTHER" id="PTHR10259">
    <property type="entry name" value="THIOPURINE S-METHYLTRANSFERASE"/>
    <property type="match status" value="1"/>
</dbReference>
<dbReference type="PANTHER" id="PTHR10259:SF11">
    <property type="entry name" value="THIOPURINE S-METHYLTRANSFERASE"/>
    <property type="match status" value="1"/>
</dbReference>
<dbReference type="Pfam" id="PF05724">
    <property type="entry name" value="TPMT"/>
    <property type="match status" value="1"/>
</dbReference>
<dbReference type="PIRSF" id="PIRSF023956">
    <property type="entry name" value="Thiopurine_S-methyltransferase"/>
    <property type="match status" value="1"/>
</dbReference>
<dbReference type="SUPFAM" id="SSF53335">
    <property type="entry name" value="S-adenosyl-L-methionine-dependent methyltransferases"/>
    <property type="match status" value="1"/>
</dbReference>
<dbReference type="PROSITE" id="PS51585">
    <property type="entry name" value="SAM_MT_TPMT"/>
    <property type="match status" value="1"/>
</dbReference>
<name>TPMT_TERTT</name>
<sequence length="214" mass="23655">MKASFWHEKWKKREIGFHESVVNPALTDHWHALSAAGGSVFVPLCGKSLDLGWLLSQGVSVIGVELSEIAVQELFVSLDIEPSVSDVENFKLYSAENIAIWVGDIFNLNKAWLGVITAIYDRAALVALPESMRLEYAGKLIELSNCATQLLVTFEYDQSLHQGPPFSVPESAVQKCYGTRYQLQCLERKAVAGGLKGRIAATESVWKLSRNINS</sequence>
<feature type="chain" id="PRO_1000213024" description="Thiopurine S-methyltransferase">
    <location>
        <begin position="1"/>
        <end position="214"/>
    </location>
</feature>
<feature type="binding site" evidence="1">
    <location>
        <position position="10"/>
    </location>
    <ligand>
        <name>S-adenosyl-L-methionine</name>
        <dbReference type="ChEBI" id="CHEBI:59789"/>
    </ligand>
</feature>
<feature type="binding site" evidence="1">
    <location>
        <position position="44"/>
    </location>
    <ligand>
        <name>S-adenosyl-L-methionine</name>
        <dbReference type="ChEBI" id="CHEBI:59789"/>
    </ligand>
</feature>
<feature type="binding site" evidence="1">
    <location>
        <position position="65"/>
    </location>
    <ligand>
        <name>S-adenosyl-L-methionine</name>
        <dbReference type="ChEBI" id="CHEBI:59789"/>
    </ligand>
</feature>
<feature type="binding site" evidence="1">
    <location>
        <position position="122"/>
    </location>
    <ligand>
        <name>S-adenosyl-L-methionine</name>
        <dbReference type="ChEBI" id="CHEBI:59789"/>
    </ligand>
</feature>
<organism>
    <name type="scientific">Teredinibacter turnerae (strain ATCC 39867 / T7901)</name>
    <dbReference type="NCBI Taxonomy" id="377629"/>
    <lineage>
        <taxon>Bacteria</taxon>
        <taxon>Pseudomonadati</taxon>
        <taxon>Pseudomonadota</taxon>
        <taxon>Gammaproteobacteria</taxon>
        <taxon>Cellvibrionales</taxon>
        <taxon>Cellvibrionaceae</taxon>
        <taxon>Teredinibacter</taxon>
    </lineage>
</organism>
<evidence type="ECO:0000255" key="1">
    <source>
        <dbReference type="HAMAP-Rule" id="MF_00812"/>
    </source>
</evidence>
<comment type="catalytic activity">
    <reaction evidence="1">
        <text>S-adenosyl-L-methionine + a thiopurine = S-adenosyl-L-homocysteine + a thiopurine S-methylether.</text>
        <dbReference type="EC" id="2.1.1.67"/>
    </reaction>
</comment>
<comment type="subcellular location">
    <subcellularLocation>
        <location evidence="1">Cytoplasm</location>
    </subcellularLocation>
</comment>
<comment type="similarity">
    <text evidence="1">Belongs to the class I-like SAM-binding methyltransferase superfamily. TPMT family.</text>
</comment>
<proteinExistence type="inferred from homology"/>
<keyword id="KW-0963">Cytoplasm</keyword>
<keyword id="KW-0489">Methyltransferase</keyword>
<keyword id="KW-1185">Reference proteome</keyword>
<keyword id="KW-0949">S-adenosyl-L-methionine</keyword>
<keyword id="KW-0808">Transferase</keyword>
<accession>C5BIS1</accession>